<organism>
    <name type="scientific">Pediococcus pentosaceus (strain ATCC 25745 / CCUG 21536 / LMG 10740 / 183-1w)</name>
    <dbReference type="NCBI Taxonomy" id="278197"/>
    <lineage>
        <taxon>Bacteria</taxon>
        <taxon>Bacillati</taxon>
        <taxon>Bacillota</taxon>
        <taxon>Bacilli</taxon>
        <taxon>Lactobacillales</taxon>
        <taxon>Lactobacillaceae</taxon>
        <taxon>Pediococcus</taxon>
    </lineage>
</organism>
<gene>
    <name evidence="1" type="primary">htpX</name>
    <name type="ordered locus">PEPE_1564</name>
</gene>
<accession>Q03DY7</accession>
<protein>
    <recommendedName>
        <fullName evidence="1">Protease HtpX homolog</fullName>
        <ecNumber evidence="1">3.4.24.-</ecNumber>
    </recommendedName>
</protein>
<proteinExistence type="inferred from homology"/>
<dbReference type="EC" id="3.4.24.-" evidence="1"/>
<dbReference type="EMBL" id="CP000422">
    <property type="protein sequence ID" value="ABJ68585.1"/>
    <property type="molecule type" value="Genomic_DNA"/>
</dbReference>
<dbReference type="RefSeq" id="WP_002833010.1">
    <property type="nucleotide sequence ID" value="NC_008525.1"/>
</dbReference>
<dbReference type="STRING" id="278197.PEPE_1564"/>
<dbReference type="GeneID" id="33062270"/>
<dbReference type="KEGG" id="ppe:PEPE_1564"/>
<dbReference type="eggNOG" id="COG0501">
    <property type="taxonomic scope" value="Bacteria"/>
</dbReference>
<dbReference type="HOGENOM" id="CLU_042266_2_1_9"/>
<dbReference type="OrthoDB" id="15218at2"/>
<dbReference type="Proteomes" id="UP000000773">
    <property type="component" value="Chromosome"/>
</dbReference>
<dbReference type="GO" id="GO:0005886">
    <property type="term" value="C:plasma membrane"/>
    <property type="evidence" value="ECO:0007669"/>
    <property type="project" value="UniProtKB-SubCell"/>
</dbReference>
<dbReference type="GO" id="GO:0004222">
    <property type="term" value="F:metalloendopeptidase activity"/>
    <property type="evidence" value="ECO:0007669"/>
    <property type="project" value="UniProtKB-UniRule"/>
</dbReference>
<dbReference type="GO" id="GO:0008270">
    <property type="term" value="F:zinc ion binding"/>
    <property type="evidence" value="ECO:0007669"/>
    <property type="project" value="UniProtKB-UniRule"/>
</dbReference>
<dbReference type="GO" id="GO:0006508">
    <property type="term" value="P:proteolysis"/>
    <property type="evidence" value="ECO:0007669"/>
    <property type="project" value="UniProtKB-KW"/>
</dbReference>
<dbReference type="CDD" id="cd07340">
    <property type="entry name" value="M48B_Htpx_like"/>
    <property type="match status" value="1"/>
</dbReference>
<dbReference type="Gene3D" id="3.30.2010.10">
    <property type="entry name" value="Metalloproteases ('zincins'), catalytic domain"/>
    <property type="match status" value="1"/>
</dbReference>
<dbReference type="HAMAP" id="MF_00188">
    <property type="entry name" value="Pept_M48_protease_HtpX"/>
    <property type="match status" value="1"/>
</dbReference>
<dbReference type="InterPro" id="IPR050083">
    <property type="entry name" value="HtpX_protease"/>
</dbReference>
<dbReference type="InterPro" id="IPR022919">
    <property type="entry name" value="Pept_M48_protease_HtpX"/>
</dbReference>
<dbReference type="InterPro" id="IPR001915">
    <property type="entry name" value="Peptidase_M48"/>
</dbReference>
<dbReference type="NCBIfam" id="NF003425">
    <property type="entry name" value="PRK04897.1"/>
    <property type="match status" value="1"/>
</dbReference>
<dbReference type="PANTHER" id="PTHR43221">
    <property type="entry name" value="PROTEASE HTPX"/>
    <property type="match status" value="1"/>
</dbReference>
<dbReference type="PANTHER" id="PTHR43221:SF1">
    <property type="entry name" value="PROTEASE HTPX"/>
    <property type="match status" value="1"/>
</dbReference>
<dbReference type="Pfam" id="PF01435">
    <property type="entry name" value="Peptidase_M48"/>
    <property type="match status" value="1"/>
</dbReference>
<comment type="cofactor">
    <cofactor evidence="1">
        <name>Zn(2+)</name>
        <dbReference type="ChEBI" id="CHEBI:29105"/>
    </cofactor>
    <text evidence="1">Binds 1 zinc ion per subunit.</text>
</comment>
<comment type="subcellular location">
    <subcellularLocation>
        <location evidence="1">Cell membrane</location>
        <topology evidence="1">Multi-pass membrane protein</topology>
    </subcellularLocation>
</comment>
<comment type="similarity">
    <text evidence="1">Belongs to the peptidase M48B family.</text>
</comment>
<reference key="1">
    <citation type="journal article" date="2006" name="Proc. Natl. Acad. Sci. U.S.A.">
        <title>Comparative genomics of the lactic acid bacteria.</title>
        <authorList>
            <person name="Makarova K.S."/>
            <person name="Slesarev A."/>
            <person name="Wolf Y.I."/>
            <person name="Sorokin A."/>
            <person name="Mirkin B."/>
            <person name="Koonin E.V."/>
            <person name="Pavlov A."/>
            <person name="Pavlova N."/>
            <person name="Karamychev V."/>
            <person name="Polouchine N."/>
            <person name="Shakhova V."/>
            <person name="Grigoriev I."/>
            <person name="Lou Y."/>
            <person name="Rohksar D."/>
            <person name="Lucas S."/>
            <person name="Huang K."/>
            <person name="Goodstein D.M."/>
            <person name="Hawkins T."/>
            <person name="Plengvidhya V."/>
            <person name="Welker D."/>
            <person name="Hughes J."/>
            <person name="Goh Y."/>
            <person name="Benson A."/>
            <person name="Baldwin K."/>
            <person name="Lee J.-H."/>
            <person name="Diaz-Muniz I."/>
            <person name="Dosti B."/>
            <person name="Smeianov V."/>
            <person name="Wechter W."/>
            <person name="Barabote R."/>
            <person name="Lorca G."/>
            <person name="Altermann E."/>
            <person name="Barrangou R."/>
            <person name="Ganesan B."/>
            <person name="Xie Y."/>
            <person name="Rawsthorne H."/>
            <person name="Tamir D."/>
            <person name="Parker C."/>
            <person name="Breidt F."/>
            <person name="Broadbent J.R."/>
            <person name="Hutkins R."/>
            <person name="O'Sullivan D."/>
            <person name="Steele J."/>
            <person name="Unlu G."/>
            <person name="Saier M.H. Jr."/>
            <person name="Klaenhammer T."/>
            <person name="Richardson P."/>
            <person name="Kozyavkin S."/>
            <person name="Weimer B.C."/>
            <person name="Mills D.A."/>
        </authorList>
    </citation>
    <scope>NUCLEOTIDE SEQUENCE [LARGE SCALE GENOMIC DNA]</scope>
    <source>
        <strain>ATCC 25745 / CCUG 21536 / LMG 10740 / 183-1w</strain>
    </source>
</reference>
<sequence>MLYQQIASNKRKTVYVMIGFAILVLFIGAAVGYVFYDSAMAGIIMAAVIAAIYMAMMIANSTNVVMGMNHATEISEADHPEIWHIVEDMALVANIPMPKVYIVNDASPNAFATGNSPKNAAVAVTTGILERLNREELEGVIGHEVSHIRNYDIRLSTIALALSSAIAMLVNIGMRSFWWGGGRRRNDNDNEGGSLEIVMMIISIVLVILGPIATTIAQLALSRNREYLADASSVELTRNPLGLIHALQKISVSEPMKEADPSSAALYISDPFKKKRTMAHLFDTHPPIEDRIQRLERM</sequence>
<feature type="chain" id="PRO_1000020905" description="Protease HtpX homolog">
    <location>
        <begin position="1"/>
        <end position="298"/>
    </location>
</feature>
<feature type="transmembrane region" description="Helical" evidence="1">
    <location>
        <begin position="15"/>
        <end position="35"/>
    </location>
</feature>
<feature type="transmembrane region" description="Helical" evidence="1">
    <location>
        <begin position="39"/>
        <end position="59"/>
    </location>
</feature>
<feature type="transmembrane region" description="Helical" evidence="1">
    <location>
        <begin position="158"/>
        <end position="178"/>
    </location>
</feature>
<feature type="transmembrane region" description="Helical" evidence="1">
    <location>
        <begin position="197"/>
        <end position="217"/>
    </location>
</feature>
<feature type="active site" evidence="1">
    <location>
        <position position="144"/>
    </location>
</feature>
<feature type="binding site" evidence="1">
    <location>
        <position position="143"/>
    </location>
    <ligand>
        <name>Zn(2+)</name>
        <dbReference type="ChEBI" id="CHEBI:29105"/>
        <note>catalytic</note>
    </ligand>
</feature>
<feature type="binding site" evidence="1">
    <location>
        <position position="147"/>
    </location>
    <ligand>
        <name>Zn(2+)</name>
        <dbReference type="ChEBI" id="CHEBI:29105"/>
        <note>catalytic</note>
    </ligand>
</feature>
<feature type="binding site" evidence="1">
    <location>
        <position position="226"/>
    </location>
    <ligand>
        <name>Zn(2+)</name>
        <dbReference type="ChEBI" id="CHEBI:29105"/>
        <note>catalytic</note>
    </ligand>
</feature>
<evidence type="ECO:0000255" key="1">
    <source>
        <dbReference type="HAMAP-Rule" id="MF_00188"/>
    </source>
</evidence>
<name>HTPX_PEDPA</name>
<keyword id="KW-1003">Cell membrane</keyword>
<keyword id="KW-0378">Hydrolase</keyword>
<keyword id="KW-0472">Membrane</keyword>
<keyword id="KW-0479">Metal-binding</keyword>
<keyword id="KW-0482">Metalloprotease</keyword>
<keyword id="KW-0645">Protease</keyword>
<keyword id="KW-0812">Transmembrane</keyword>
<keyword id="KW-1133">Transmembrane helix</keyword>
<keyword id="KW-0862">Zinc</keyword>